<name>MNME_LISW6</name>
<evidence type="ECO:0000255" key="1">
    <source>
        <dbReference type="HAMAP-Rule" id="MF_00379"/>
    </source>
</evidence>
<proteinExistence type="inferred from homology"/>
<organism>
    <name type="scientific">Listeria welshimeri serovar 6b (strain ATCC 35897 / DSM 20650 / CCUG 15529 / CIP 8149 / NCTC 11857 / SLCC 5334 / V8)</name>
    <dbReference type="NCBI Taxonomy" id="386043"/>
    <lineage>
        <taxon>Bacteria</taxon>
        <taxon>Bacillati</taxon>
        <taxon>Bacillota</taxon>
        <taxon>Bacilli</taxon>
        <taxon>Bacillales</taxon>
        <taxon>Listeriaceae</taxon>
        <taxon>Listeria</taxon>
    </lineage>
</organism>
<dbReference type="EC" id="3.6.-.-" evidence="1"/>
<dbReference type="EMBL" id="AM263198">
    <property type="protein sequence ID" value="CAK22164.1"/>
    <property type="molecule type" value="Genomic_DNA"/>
</dbReference>
<dbReference type="RefSeq" id="WP_011703435.1">
    <property type="nucleotide sequence ID" value="NC_008555.1"/>
</dbReference>
<dbReference type="SMR" id="A0AMD2"/>
<dbReference type="STRING" id="386043.lwe2746"/>
<dbReference type="GeneID" id="61190668"/>
<dbReference type="KEGG" id="lwe:lwe2746"/>
<dbReference type="eggNOG" id="COG0486">
    <property type="taxonomic scope" value="Bacteria"/>
</dbReference>
<dbReference type="HOGENOM" id="CLU_019624_4_1_9"/>
<dbReference type="OrthoDB" id="9805918at2"/>
<dbReference type="Proteomes" id="UP000000779">
    <property type="component" value="Chromosome"/>
</dbReference>
<dbReference type="GO" id="GO:0005829">
    <property type="term" value="C:cytosol"/>
    <property type="evidence" value="ECO:0007669"/>
    <property type="project" value="TreeGrafter"/>
</dbReference>
<dbReference type="GO" id="GO:0005525">
    <property type="term" value="F:GTP binding"/>
    <property type="evidence" value="ECO:0007669"/>
    <property type="project" value="UniProtKB-UniRule"/>
</dbReference>
<dbReference type="GO" id="GO:0003924">
    <property type="term" value="F:GTPase activity"/>
    <property type="evidence" value="ECO:0007669"/>
    <property type="project" value="UniProtKB-UniRule"/>
</dbReference>
<dbReference type="GO" id="GO:0046872">
    <property type="term" value="F:metal ion binding"/>
    <property type="evidence" value="ECO:0007669"/>
    <property type="project" value="UniProtKB-KW"/>
</dbReference>
<dbReference type="GO" id="GO:0030488">
    <property type="term" value="P:tRNA methylation"/>
    <property type="evidence" value="ECO:0007669"/>
    <property type="project" value="TreeGrafter"/>
</dbReference>
<dbReference type="GO" id="GO:0002098">
    <property type="term" value="P:tRNA wobble uridine modification"/>
    <property type="evidence" value="ECO:0007669"/>
    <property type="project" value="TreeGrafter"/>
</dbReference>
<dbReference type="CDD" id="cd04164">
    <property type="entry name" value="trmE"/>
    <property type="match status" value="1"/>
</dbReference>
<dbReference type="CDD" id="cd14858">
    <property type="entry name" value="TrmE_N"/>
    <property type="match status" value="1"/>
</dbReference>
<dbReference type="FunFam" id="3.30.1360.120:FF:000003">
    <property type="entry name" value="tRNA modification GTPase MnmE"/>
    <property type="match status" value="1"/>
</dbReference>
<dbReference type="FunFam" id="3.40.50.300:FF:000494">
    <property type="entry name" value="tRNA modification GTPase MnmE"/>
    <property type="match status" value="1"/>
</dbReference>
<dbReference type="Gene3D" id="3.40.50.300">
    <property type="entry name" value="P-loop containing nucleotide triphosphate hydrolases"/>
    <property type="match status" value="1"/>
</dbReference>
<dbReference type="Gene3D" id="3.30.1360.120">
    <property type="entry name" value="Probable tRNA modification gtpase trme, domain 1"/>
    <property type="match status" value="1"/>
</dbReference>
<dbReference type="Gene3D" id="1.20.120.430">
    <property type="entry name" value="tRNA modification GTPase MnmE domain 2"/>
    <property type="match status" value="1"/>
</dbReference>
<dbReference type="HAMAP" id="MF_00379">
    <property type="entry name" value="GTPase_MnmE"/>
    <property type="match status" value="1"/>
</dbReference>
<dbReference type="InterPro" id="IPR031168">
    <property type="entry name" value="G_TrmE"/>
</dbReference>
<dbReference type="InterPro" id="IPR006073">
    <property type="entry name" value="GTP-bd"/>
</dbReference>
<dbReference type="InterPro" id="IPR018948">
    <property type="entry name" value="GTP-bd_TrmE_N"/>
</dbReference>
<dbReference type="InterPro" id="IPR004520">
    <property type="entry name" value="GTPase_MnmE"/>
</dbReference>
<dbReference type="InterPro" id="IPR027368">
    <property type="entry name" value="MnmE_dom2"/>
</dbReference>
<dbReference type="InterPro" id="IPR025867">
    <property type="entry name" value="MnmE_helical"/>
</dbReference>
<dbReference type="InterPro" id="IPR027417">
    <property type="entry name" value="P-loop_NTPase"/>
</dbReference>
<dbReference type="InterPro" id="IPR005225">
    <property type="entry name" value="Small_GTP-bd"/>
</dbReference>
<dbReference type="InterPro" id="IPR027266">
    <property type="entry name" value="TrmE/GcvT_dom1"/>
</dbReference>
<dbReference type="NCBIfam" id="TIGR00450">
    <property type="entry name" value="mnmE_trmE_thdF"/>
    <property type="match status" value="1"/>
</dbReference>
<dbReference type="NCBIfam" id="NF003661">
    <property type="entry name" value="PRK05291.1-3"/>
    <property type="match status" value="1"/>
</dbReference>
<dbReference type="NCBIfam" id="TIGR00231">
    <property type="entry name" value="small_GTP"/>
    <property type="match status" value="1"/>
</dbReference>
<dbReference type="PANTHER" id="PTHR42714">
    <property type="entry name" value="TRNA MODIFICATION GTPASE GTPBP3"/>
    <property type="match status" value="1"/>
</dbReference>
<dbReference type="PANTHER" id="PTHR42714:SF2">
    <property type="entry name" value="TRNA MODIFICATION GTPASE GTPBP3, MITOCHONDRIAL"/>
    <property type="match status" value="1"/>
</dbReference>
<dbReference type="Pfam" id="PF01926">
    <property type="entry name" value="MMR_HSR1"/>
    <property type="match status" value="1"/>
</dbReference>
<dbReference type="Pfam" id="PF12631">
    <property type="entry name" value="MnmE_helical"/>
    <property type="match status" value="1"/>
</dbReference>
<dbReference type="Pfam" id="PF10396">
    <property type="entry name" value="TrmE_N"/>
    <property type="match status" value="1"/>
</dbReference>
<dbReference type="SUPFAM" id="SSF52540">
    <property type="entry name" value="P-loop containing nucleoside triphosphate hydrolases"/>
    <property type="match status" value="1"/>
</dbReference>
<dbReference type="SUPFAM" id="SSF116878">
    <property type="entry name" value="TrmE connector domain"/>
    <property type="match status" value="1"/>
</dbReference>
<dbReference type="PROSITE" id="PS51709">
    <property type="entry name" value="G_TRME"/>
    <property type="match status" value="1"/>
</dbReference>
<protein>
    <recommendedName>
        <fullName evidence="1">tRNA modification GTPase MnmE</fullName>
        <ecNumber evidence="1">3.6.-.-</ecNumber>
    </recommendedName>
</protein>
<sequence>MEFDTIAAISTPPGEGAIAIIRLSGPEAIQIADRIFYAKKNLSEAESHTIHYGHIKEDGEVIEEVMVTVMRAPRTFTREDVVEINAHGGIVSVNRVLQLLLRNGANLAEPGEFTKRAFLNGRIDLSQAEAVMDLIRAKTDRAMGVAIRQMDGNLSRLIRNLRQEILDALAQVEVNIDYPEYDDVEEMTQRMLLEKTELVRASVEQLLQTASQGKILREGLATAIIGRPNVGKSSLLNQLIQEEKAIVTDIAGTTRDIIEEYVNVRGVPLRLIDTAGIRETEDIVEKIGVERSRKALADADFILLVLNQNEELTVEDEALFEAAAGHNYVVVLNKTDLETKLDINKVRELAGENPIVSTSLVNDEGLEALEEAIKTLFFAGDIDAGDATYVSNVRHIALLHQALEALNAVTTGIQLGMPVDIVQIDMTRAWDLLGEITGDSVQDELLDQLFNQFCLGK</sequence>
<reference key="1">
    <citation type="journal article" date="2006" name="J. Bacteriol.">
        <title>Whole-genome sequence of Listeria welshimeri reveals common steps in genome reduction with Listeria innocua as compared to Listeria monocytogenes.</title>
        <authorList>
            <person name="Hain T."/>
            <person name="Steinweg C."/>
            <person name="Kuenne C.T."/>
            <person name="Billion A."/>
            <person name="Ghai R."/>
            <person name="Chatterjee S.S."/>
            <person name="Domann E."/>
            <person name="Kaerst U."/>
            <person name="Goesmann A."/>
            <person name="Bekel T."/>
            <person name="Bartels D."/>
            <person name="Kaiser O."/>
            <person name="Meyer F."/>
            <person name="Puehler A."/>
            <person name="Weisshaar B."/>
            <person name="Wehland J."/>
            <person name="Liang C."/>
            <person name="Dandekar T."/>
            <person name="Lampidis R."/>
            <person name="Kreft J."/>
            <person name="Goebel W."/>
            <person name="Chakraborty T."/>
        </authorList>
    </citation>
    <scope>NUCLEOTIDE SEQUENCE [LARGE SCALE GENOMIC DNA]</scope>
    <source>
        <strain>ATCC 35897 / DSM 20650 / CCUG 15529 / CIP 8149 / NCTC 11857 / SLCC 5334 / V8</strain>
    </source>
</reference>
<keyword id="KW-0963">Cytoplasm</keyword>
<keyword id="KW-0342">GTP-binding</keyword>
<keyword id="KW-0378">Hydrolase</keyword>
<keyword id="KW-0460">Magnesium</keyword>
<keyword id="KW-0479">Metal-binding</keyword>
<keyword id="KW-0547">Nucleotide-binding</keyword>
<keyword id="KW-0630">Potassium</keyword>
<keyword id="KW-0819">tRNA processing</keyword>
<accession>A0AMD2</accession>
<gene>
    <name evidence="1" type="primary">mnmE</name>
    <name evidence="1" type="synonym">trmE</name>
    <name type="ordered locus">lwe2746</name>
</gene>
<feature type="chain" id="PRO_1000048839" description="tRNA modification GTPase MnmE">
    <location>
        <begin position="1"/>
        <end position="457"/>
    </location>
</feature>
<feature type="domain" description="TrmE-type G">
    <location>
        <begin position="219"/>
        <end position="378"/>
    </location>
</feature>
<feature type="binding site" evidence="1">
    <location>
        <position position="22"/>
    </location>
    <ligand>
        <name>(6S)-5-formyl-5,6,7,8-tetrahydrofolate</name>
        <dbReference type="ChEBI" id="CHEBI:57457"/>
    </ligand>
</feature>
<feature type="binding site" evidence="1">
    <location>
        <position position="83"/>
    </location>
    <ligand>
        <name>(6S)-5-formyl-5,6,7,8-tetrahydrofolate</name>
        <dbReference type="ChEBI" id="CHEBI:57457"/>
    </ligand>
</feature>
<feature type="binding site" evidence="1">
    <location>
        <position position="122"/>
    </location>
    <ligand>
        <name>(6S)-5-formyl-5,6,7,8-tetrahydrofolate</name>
        <dbReference type="ChEBI" id="CHEBI:57457"/>
    </ligand>
</feature>
<feature type="binding site" evidence="1">
    <location>
        <begin position="229"/>
        <end position="234"/>
    </location>
    <ligand>
        <name>GTP</name>
        <dbReference type="ChEBI" id="CHEBI:37565"/>
    </ligand>
</feature>
<feature type="binding site" evidence="1">
    <location>
        <position position="229"/>
    </location>
    <ligand>
        <name>K(+)</name>
        <dbReference type="ChEBI" id="CHEBI:29103"/>
    </ligand>
</feature>
<feature type="binding site" evidence="1">
    <location>
        <position position="233"/>
    </location>
    <ligand>
        <name>Mg(2+)</name>
        <dbReference type="ChEBI" id="CHEBI:18420"/>
    </ligand>
</feature>
<feature type="binding site" evidence="1">
    <location>
        <begin position="248"/>
        <end position="254"/>
    </location>
    <ligand>
        <name>GTP</name>
        <dbReference type="ChEBI" id="CHEBI:37565"/>
    </ligand>
</feature>
<feature type="binding site" evidence="1">
    <location>
        <position position="248"/>
    </location>
    <ligand>
        <name>K(+)</name>
        <dbReference type="ChEBI" id="CHEBI:29103"/>
    </ligand>
</feature>
<feature type="binding site" evidence="1">
    <location>
        <position position="250"/>
    </location>
    <ligand>
        <name>K(+)</name>
        <dbReference type="ChEBI" id="CHEBI:29103"/>
    </ligand>
</feature>
<feature type="binding site" evidence="1">
    <location>
        <position position="253"/>
    </location>
    <ligand>
        <name>K(+)</name>
        <dbReference type="ChEBI" id="CHEBI:29103"/>
    </ligand>
</feature>
<feature type="binding site" evidence="1">
    <location>
        <position position="254"/>
    </location>
    <ligand>
        <name>Mg(2+)</name>
        <dbReference type="ChEBI" id="CHEBI:18420"/>
    </ligand>
</feature>
<feature type="binding site" evidence="1">
    <location>
        <begin position="273"/>
        <end position="276"/>
    </location>
    <ligand>
        <name>GTP</name>
        <dbReference type="ChEBI" id="CHEBI:37565"/>
    </ligand>
</feature>
<feature type="binding site" evidence="1">
    <location>
        <position position="457"/>
    </location>
    <ligand>
        <name>(6S)-5-formyl-5,6,7,8-tetrahydrofolate</name>
        <dbReference type="ChEBI" id="CHEBI:57457"/>
    </ligand>
</feature>
<comment type="function">
    <text evidence="1">Exhibits a very high intrinsic GTPase hydrolysis rate. Involved in the addition of a carboxymethylaminomethyl (cmnm) group at the wobble position (U34) of certain tRNAs, forming tRNA-cmnm(5)s(2)U34.</text>
</comment>
<comment type="cofactor">
    <cofactor evidence="1">
        <name>K(+)</name>
        <dbReference type="ChEBI" id="CHEBI:29103"/>
    </cofactor>
    <text evidence="1">Binds 1 potassium ion per subunit.</text>
</comment>
<comment type="subunit">
    <text evidence="1">Homodimer. Heterotetramer of two MnmE and two MnmG subunits.</text>
</comment>
<comment type="subcellular location">
    <subcellularLocation>
        <location evidence="1">Cytoplasm</location>
    </subcellularLocation>
</comment>
<comment type="similarity">
    <text evidence="1">Belongs to the TRAFAC class TrmE-Era-EngA-EngB-Septin-like GTPase superfamily. TrmE GTPase family.</text>
</comment>